<name>SMP1_MAGPO</name>
<keyword id="KW-0903">Direct protein sequencing</keyword>
<keyword id="KW-0325">Glycoprotein</keyword>
<keyword id="KW-0378">Hydrolase</keyword>
<keyword id="KW-0645">Protease</keyword>
<keyword id="KW-0964">Secreted</keyword>
<keyword id="KW-0720">Serine protease</keyword>
<keyword id="KW-0732">Signal</keyword>
<keyword id="KW-0865">Zymogen</keyword>
<comment type="subcellular location">
    <subcellularLocation>
        <location>Secreted</location>
    </subcellularLocation>
</comment>
<comment type="similarity">
    <text evidence="4">Belongs to the peptidase S8 family.</text>
</comment>
<protein>
    <recommendedName>
        <fullName>Subtilisin-like proteinase Mp1</fullName>
        <ecNumber>3.4.21.-</ecNumber>
    </recommendedName>
</protein>
<proteinExistence type="evidence at protein level"/>
<dbReference type="EC" id="3.4.21.-"/>
<dbReference type="EMBL" id="AF118126">
    <property type="protein sequence ID" value="AAD26255.1"/>
    <property type="molecule type" value="Genomic_DNA"/>
</dbReference>
<dbReference type="SMR" id="Q9Y778"/>
<dbReference type="VEuPathDB" id="FungiDB:MAPG_06007"/>
<dbReference type="VEuPathDB" id="FungiDB:MAPG_07242"/>
<dbReference type="GO" id="GO:0005576">
    <property type="term" value="C:extracellular region"/>
    <property type="evidence" value="ECO:0007669"/>
    <property type="project" value="UniProtKB-SubCell"/>
</dbReference>
<dbReference type="GO" id="GO:0004252">
    <property type="term" value="F:serine-type endopeptidase activity"/>
    <property type="evidence" value="ECO:0007669"/>
    <property type="project" value="InterPro"/>
</dbReference>
<dbReference type="GO" id="GO:0006508">
    <property type="term" value="P:proteolysis"/>
    <property type="evidence" value="ECO:0007669"/>
    <property type="project" value="UniProtKB-KW"/>
</dbReference>
<dbReference type="CDD" id="cd04077">
    <property type="entry name" value="Peptidases_S8_PCSK9_ProteinaseK_like"/>
    <property type="match status" value="1"/>
</dbReference>
<dbReference type="FunFam" id="3.40.50.200:FF:000014">
    <property type="entry name" value="Proteinase K"/>
    <property type="match status" value="1"/>
</dbReference>
<dbReference type="Gene3D" id="3.30.70.80">
    <property type="entry name" value="Peptidase S8 propeptide/proteinase inhibitor I9"/>
    <property type="match status" value="1"/>
</dbReference>
<dbReference type="Gene3D" id="3.40.50.200">
    <property type="entry name" value="Peptidase S8/S53 domain"/>
    <property type="match status" value="1"/>
</dbReference>
<dbReference type="InterPro" id="IPR034193">
    <property type="entry name" value="PCSK9_ProteinaseK-like"/>
</dbReference>
<dbReference type="InterPro" id="IPR000209">
    <property type="entry name" value="Peptidase_S8/S53_dom"/>
</dbReference>
<dbReference type="InterPro" id="IPR036852">
    <property type="entry name" value="Peptidase_S8/S53_dom_sf"/>
</dbReference>
<dbReference type="InterPro" id="IPR023827">
    <property type="entry name" value="Peptidase_S8_Asp-AS"/>
</dbReference>
<dbReference type="InterPro" id="IPR022398">
    <property type="entry name" value="Peptidase_S8_His-AS"/>
</dbReference>
<dbReference type="InterPro" id="IPR023828">
    <property type="entry name" value="Peptidase_S8_Ser-AS"/>
</dbReference>
<dbReference type="InterPro" id="IPR050131">
    <property type="entry name" value="Peptidase_S8_subtilisin-like"/>
</dbReference>
<dbReference type="InterPro" id="IPR015500">
    <property type="entry name" value="Peptidase_S8_subtilisin-rel"/>
</dbReference>
<dbReference type="InterPro" id="IPR010259">
    <property type="entry name" value="S8pro/Inhibitor_I9"/>
</dbReference>
<dbReference type="InterPro" id="IPR037045">
    <property type="entry name" value="S8pro/Inhibitor_I9_sf"/>
</dbReference>
<dbReference type="PANTHER" id="PTHR43806:SF58">
    <property type="entry name" value="ALKALINE PROTEASE 1-RELATED"/>
    <property type="match status" value="1"/>
</dbReference>
<dbReference type="PANTHER" id="PTHR43806">
    <property type="entry name" value="PEPTIDASE S8"/>
    <property type="match status" value="1"/>
</dbReference>
<dbReference type="Pfam" id="PF05922">
    <property type="entry name" value="Inhibitor_I9"/>
    <property type="match status" value="1"/>
</dbReference>
<dbReference type="Pfam" id="PF00082">
    <property type="entry name" value="Peptidase_S8"/>
    <property type="match status" value="1"/>
</dbReference>
<dbReference type="PRINTS" id="PR00723">
    <property type="entry name" value="SUBTILISIN"/>
</dbReference>
<dbReference type="SUPFAM" id="SSF54897">
    <property type="entry name" value="Protease propeptides/inhibitors"/>
    <property type="match status" value="1"/>
</dbReference>
<dbReference type="SUPFAM" id="SSF52743">
    <property type="entry name" value="Subtilisin-like"/>
    <property type="match status" value="1"/>
</dbReference>
<dbReference type="PROSITE" id="PS51892">
    <property type="entry name" value="SUBTILASE"/>
    <property type="match status" value="1"/>
</dbReference>
<dbReference type="PROSITE" id="PS00136">
    <property type="entry name" value="SUBTILASE_ASP"/>
    <property type="match status" value="1"/>
</dbReference>
<dbReference type="PROSITE" id="PS00137">
    <property type="entry name" value="SUBTILASE_HIS"/>
    <property type="match status" value="1"/>
</dbReference>
<dbReference type="PROSITE" id="PS00138">
    <property type="entry name" value="SUBTILASE_SER"/>
    <property type="match status" value="1"/>
</dbReference>
<evidence type="ECO:0000255" key="1"/>
<evidence type="ECO:0000255" key="2">
    <source>
        <dbReference type="PROSITE-ProRule" id="PRU01240"/>
    </source>
</evidence>
<evidence type="ECO:0000269" key="3">
    <source>
    </source>
</evidence>
<evidence type="ECO:0000305" key="4"/>
<sequence>MVGFKTLALHLAAVLPALAAPVDKQATQVVPNSYIITLKQGASAASFHNHLSWVGDVHRRSVSKRDTTGVDKVFDLDGFTAYSGSFDAATLQEIKKSDEVAFVEPDQVWDLYTLSTQSGAPWGLGSISHRKPNSTDYVYDPAGLGADHYAYIIDTGLDTEHVEFEGRGTLGYNAYPNSQFIDKIGHGTHVAGTIAGKTYGVAKKASIVSVRVFDTGSVTRQSTTAIVLDGFSWAVKDITAKGRQAKSVISMSLGGGRSEAFNAAVEAAYQANILTVAAAGNSAWDASQYSPASAPNAITVGAIDVDNVMAWFSNYGPVVDVFAPGVAVESAWIGSSHAEHDVLDGTSMATPHVSGLVLYLKSLEGFASAAAVTDRIKALGTNDVVTGLEGTDSPNLIAFNGVTA</sequence>
<reference key="1">
    <citation type="journal article" date="1999" name="Gene">
        <title>Fungal proteinase expression in the interaction of the plant pathogen Magnaporthe poae with its host.</title>
        <authorList>
            <person name="Sreedhar L."/>
            <person name="Kobayashi D.Y."/>
            <person name="Bunting T.E."/>
            <person name="Hillman B.I."/>
            <person name="Belanger F.C."/>
        </authorList>
    </citation>
    <scope>NUCLEOTIDE SEQUENCE [GENOMIC DNA]</scope>
    <scope>PROTEIN SEQUENCE OF N-TERMINUS</scope>
    <source>
        <strain>ATCC 64411 / 73-15</strain>
    </source>
</reference>
<organism>
    <name type="scientific">Magnaporthiopsis poae</name>
    <name type="common">Kentucky bluegrass fungus</name>
    <name type="synonym">Magnaporthe poae</name>
    <dbReference type="NCBI Taxonomy" id="148304"/>
    <lineage>
        <taxon>Eukaryota</taxon>
        <taxon>Fungi</taxon>
        <taxon>Dikarya</taxon>
        <taxon>Ascomycota</taxon>
        <taxon>Pezizomycotina</taxon>
        <taxon>Sordariomycetes</taxon>
        <taxon>Sordariomycetidae</taxon>
        <taxon>Magnaporthales</taxon>
        <taxon>Magnaporthaceae</taxon>
        <taxon>Magnaporthiopsis</taxon>
    </lineage>
</organism>
<feature type="signal peptide" evidence="1">
    <location>
        <begin position="1"/>
        <end position="19"/>
    </location>
</feature>
<feature type="propeptide" id="PRO_0000027163" evidence="3">
    <location>
        <begin position="20"/>
        <end position="112"/>
    </location>
</feature>
<feature type="chain" id="PRO_0000027164" description="Subtilisin-like proteinase Mp1">
    <location>
        <begin position="113"/>
        <end position="404"/>
    </location>
</feature>
<feature type="domain" description="Inhibitor I9" evidence="1">
    <location>
        <begin position="33"/>
        <end position="111"/>
    </location>
</feature>
<feature type="domain" description="Peptidase S8" evidence="2">
    <location>
        <begin position="121"/>
        <end position="404"/>
    </location>
</feature>
<feature type="active site" description="Charge relay system" evidence="2">
    <location>
        <position position="154"/>
    </location>
</feature>
<feature type="active site" description="Charge relay system" evidence="2">
    <location>
        <position position="186"/>
    </location>
</feature>
<feature type="active site" description="Charge relay system" evidence="2">
    <location>
        <position position="347"/>
    </location>
</feature>
<feature type="glycosylation site" description="N-linked (GlcNAc...) asparagine" evidence="1">
    <location>
        <position position="133"/>
    </location>
</feature>
<accession>Q9Y778</accession>